<organism>
    <name type="scientific">Brucella suis biovar 1 (strain 1330)</name>
    <dbReference type="NCBI Taxonomy" id="204722"/>
    <lineage>
        <taxon>Bacteria</taxon>
        <taxon>Pseudomonadati</taxon>
        <taxon>Pseudomonadota</taxon>
        <taxon>Alphaproteobacteria</taxon>
        <taxon>Hyphomicrobiales</taxon>
        <taxon>Brucellaceae</taxon>
        <taxon>Brucella/Ochrobactrum group</taxon>
        <taxon>Brucella</taxon>
    </lineage>
</organism>
<name>CLPP_BRUSU</name>
<proteinExistence type="inferred from homology"/>
<keyword id="KW-0963">Cytoplasm</keyword>
<keyword id="KW-0378">Hydrolase</keyword>
<keyword id="KW-0645">Protease</keyword>
<keyword id="KW-0720">Serine protease</keyword>
<evidence type="ECO:0000255" key="1">
    <source>
        <dbReference type="HAMAP-Rule" id="MF_00444"/>
    </source>
</evidence>
<accession>Q8G0I4</accession>
<accession>G0KA31</accession>
<reference key="1">
    <citation type="journal article" date="2002" name="Proc. Natl. Acad. Sci. U.S.A.">
        <title>The Brucella suis genome reveals fundamental similarities between animal and plant pathogens and symbionts.</title>
        <authorList>
            <person name="Paulsen I.T."/>
            <person name="Seshadri R."/>
            <person name="Nelson K.E."/>
            <person name="Eisen J.A."/>
            <person name="Heidelberg J.F."/>
            <person name="Read T.D."/>
            <person name="Dodson R.J."/>
            <person name="Umayam L.A."/>
            <person name="Brinkac L.M."/>
            <person name="Beanan M.J."/>
            <person name="Daugherty S.C."/>
            <person name="DeBoy R.T."/>
            <person name="Durkin A.S."/>
            <person name="Kolonay J.F."/>
            <person name="Madupu R."/>
            <person name="Nelson W.C."/>
            <person name="Ayodeji B."/>
            <person name="Kraul M."/>
            <person name="Shetty J."/>
            <person name="Malek J.A."/>
            <person name="Van Aken S.E."/>
            <person name="Riedmuller S."/>
            <person name="Tettelin H."/>
            <person name="Gill S.R."/>
            <person name="White O."/>
            <person name="Salzberg S.L."/>
            <person name="Hoover D.L."/>
            <person name="Lindler L.E."/>
            <person name="Halling S.M."/>
            <person name="Boyle S.M."/>
            <person name="Fraser C.M."/>
        </authorList>
    </citation>
    <scope>NUCLEOTIDE SEQUENCE [LARGE SCALE GENOMIC DNA]</scope>
    <source>
        <strain>1330</strain>
    </source>
</reference>
<reference key="2">
    <citation type="journal article" date="2011" name="J. Bacteriol.">
        <title>Revised genome sequence of Brucella suis 1330.</title>
        <authorList>
            <person name="Tae H."/>
            <person name="Shallom S."/>
            <person name="Settlage R."/>
            <person name="Preston D."/>
            <person name="Adams L.G."/>
            <person name="Garner H.R."/>
        </authorList>
    </citation>
    <scope>NUCLEOTIDE SEQUENCE [LARGE SCALE GENOMIC DNA]</scope>
    <source>
        <strain>1330</strain>
    </source>
</reference>
<dbReference type="EC" id="3.4.21.92" evidence="1"/>
<dbReference type="EMBL" id="AE014291">
    <property type="protein sequence ID" value="AAN30029.1"/>
    <property type="molecule type" value="Genomic_DNA"/>
</dbReference>
<dbReference type="EMBL" id="CP002997">
    <property type="protein sequence ID" value="AEM18447.1"/>
    <property type="molecule type" value="Genomic_DNA"/>
</dbReference>
<dbReference type="RefSeq" id="WP_006190460.1">
    <property type="nucleotide sequence ID" value="NZ_KN046804.1"/>
</dbReference>
<dbReference type="SMR" id="Q8G0I4"/>
<dbReference type="MEROPS" id="S14.001"/>
<dbReference type="GeneID" id="45052154"/>
<dbReference type="KEGG" id="bms:BR1109"/>
<dbReference type="KEGG" id="bsi:BS1330_I1105"/>
<dbReference type="PATRIC" id="fig|204722.21.peg.2178"/>
<dbReference type="HOGENOM" id="CLU_058707_3_2_5"/>
<dbReference type="PhylomeDB" id="Q8G0I4"/>
<dbReference type="PRO" id="PR:Q8G0I4"/>
<dbReference type="Proteomes" id="UP000007104">
    <property type="component" value="Chromosome I"/>
</dbReference>
<dbReference type="GO" id="GO:0005737">
    <property type="term" value="C:cytoplasm"/>
    <property type="evidence" value="ECO:0007669"/>
    <property type="project" value="UniProtKB-SubCell"/>
</dbReference>
<dbReference type="GO" id="GO:0009368">
    <property type="term" value="C:endopeptidase Clp complex"/>
    <property type="evidence" value="ECO:0007669"/>
    <property type="project" value="TreeGrafter"/>
</dbReference>
<dbReference type="GO" id="GO:0004176">
    <property type="term" value="F:ATP-dependent peptidase activity"/>
    <property type="evidence" value="ECO:0007669"/>
    <property type="project" value="InterPro"/>
</dbReference>
<dbReference type="GO" id="GO:0051117">
    <property type="term" value="F:ATPase binding"/>
    <property type="evidence" value="ECO:0007669"/>
    <property type="project" value="TreeGrafter"/>
</dbReference>
<dbReference type="GO" id="GO:0004252">
    <property type="term" value="F:serine-type endopeptidase activity"/>
    <property type="evidence" value="ECO:0007669"/>
    <property type="project" value="UniProtKB-UniRule"/>
</dbReference>
<dbReference type="GO" id="GO:0006515">
    <property type="term" value="P:protein quality control for misfolded or incompletely synthesized proteins"/>
    <property type="evidence" value="ECO:0007669"/>
    <property type="project" value="TreeGrafter"/>
</dbReference>
<dbReference type="CDD" id="cd07017">
    <property type="entry name" value="S14_ClpP_2"/>
    <property type="match status" value="1"/>
</dbReference>
<dbReference type="FunFam" id="3.90.226.10:FF:000001">
    <property type="entry name" value="ATP-dependent Clp protease proteolytic subunit"/>
    <property type="match status" value="1"/>
</dbReference>
<dbReference type="Gene3D" id="3.90.226.10">
    <property type="entry name" value="2-enoyl-CoA Hydratase, Chain A, domain 1"/>
    <property type="match status" value="1"/>
</dbReference>
<dbReference type="HAMAP" id="MF_00444">
    <property type="entry name" value="ClpP"/>
    <property type="match status" value="1"/>
</dbReference>
<dbReference type="InterPro" id="IPR001907">
    <property type="entry name" value="ClpP"/>
</dbReference>
<dbReference type="InterPro" id="IPR029045">
    <property type="entry name" value="ClpP/crotonase-like_dom_sf"/>
</dbReference>
<dbReference type="InterPro" id="IPR023562">
    <property type="entry name" value="ClpP/TepA"/>
</dbReference>
<dbReference type="InterPro" id="IPR033135">
    <property type="entry name" value="ClpP_His_AS"/>
</dbReference>
<dbReference type="InterPro" id="IPR018215">
    <property type="entry name" value="ClpP_Ser_AS"/>
</dbReference>
<dbReference type="NCBIfam" id="NF001368">
    <property type="entry name" value="PRK00277.1"/>
    <property type="match status" value="1"/>
</dbReference>
<dbReference type="NCBIfam" id="NF009205">
    <property type="entry name" value="PRK12553.1"/>
    <property type="match status" value="1"/>
</dbReference>
<dbReference type="PANTHER" id="PTHR10381">
    <property type="entry name" value="ATP-DEPENDENT CLP PROTEASE PROTEOLYTIC SUBUNIT"/>
    <property type="match status" value="1"/>
</dbReference>
<dbReference type="PANTHER" id="PTHR10381:SF70">
    <property type="entry name" value="ATP-DEPENDENT CLP PROTEASE PROTEOLYTIC SUBUNIT"/>
    <property type="match status" value="1"/>
</dbReference>
<dbReference type="Pfam" id="PF00574">
    <property type="entry name" value="CLP_protease"/>
    <property type="match status" value="1"/>
</dbReference>
<dbReference type="PRINTS" id="PR00127">
    <property type="entry name" value="CLPPROTEASEP"/>
</dbReference>
<dbReference type="SUPFAM" id="SSF52096">
    <property type="entry name" value="ClpP/crotonase"/>
    <property type="match status" value="1"/>
</dbReference>
<dbReference type="PROSITE" id="PS00382">
    <property type="entry name" value="CLP_PROTEASE_HIS"/>
    <property type="match status" value="1"/>
</dbReference>
<dbReference type="PROSITE" id="PS00381">
    <property type="entry name" value="CLP_PROTEASE_SER"/>
    <property type="match status" value="1"/>
</dbReference>
<feature type="chain" id="PRO_0000179518" description="ATP-dependent Clp protease proteolytic subunit">
    <location>
        <begin position="1"/>
        <end position="209"/>
    </location>
</feature>
<feature type="active site" description="Nucleophile" evidence="1">
    <location>
        <position position="106"/>
    </location>
</feature>
<feature type="active site" evidence="1">
    <location>
        <position position="131"/>
    </location>
</feature>
<gene>
    <name evidence="1" type="primary">clpP</name>
    <name type="ordered locus">BR1109</name>
    <name type="ordered locus">BS1330_I1105</name>
</gene>
<sequence>MRDPIETVMNLVPMVVEQTNRGERAYDIFSRLLKERIIFVNGPVEDGMSMLVCAQLLFLEAENPKKEINMYINSPGGVVTSGMAIYDTMQFIRPPVSTLCMGQAASMGSLLLTAGATGHRYALPNARIMVHQPSGGFQGQASDIERHAQDIIKMKRRLNEIYVKHTGRDYDTIERTLDRDHFMTAQEALEFGLIDKVVEVRDVSADESK</sequence>
<comment type="function">
    <text evidence="1">Cleaves peptides in various proteins in a process that requires ATP hydrolysis. Has a chymotrypsin-like activity. Plays a major role in the degradation of misfolded proteins.</text>
</comment>
<comment type="catalytic activity">
    <reaction evidence="1">
        <text>Hydrolysis of proteins to small peptides in the presence of ATP and magnesium. alpha-casein is the usual test substrate. In the absence of ATP, only oligopeptides shorter than five residues are hydrolyzed (such as succinyl-Leu-Tyr-|-NHMec, and Leu-Tyr-Leu-|-Tyr-Trp, in which cleavage of the -Tyr-|-Leu- and -Tyr-|-Trp bonds also occurs).</text>
        <dbReference type="EC" id="3.4.21.92"/>
    </reaction>
</comment>
<comment type="subunit">
    <text evidence="1">Fourteen ClpP subunits assemble into 2 heptameric rings which stack back to back to give a disk-like structure with a central cavity, resembling the structure of eukaryotic proteasomes.</text>
</comment>
<comment type="subcellular location">
    <subcellularLocation>
        <location evidence="1">Cytoplasm</location>
    </subcellularLocation>
</comment>
<comment type="similarity">
    <text evidence="1">Belongs to the peptidase S14 family.</text>
</comment>
<protein>
    <recommendedName>
        <fullName evidence="1">ATP-dependent Clp protease proteolytic subunit</fullName>
        <ecNumber evidence="1">3.4.21.92</ecNumber>
    </recommendedName>
    <alternativeName>
        <fullName evidence="1">Endopeptidase Clp</fullName>
    </alternativeName>
</protein>